<organism>
    <name type="scientific">Streptomyces avermitilis (strain ATCC 31267 / DSM 46492 / JCM 5070 / NBRC 14893 / NCIMB 12804 / NRRL 8165 / MA-4680)</name>
    <dbReference type="NCBI Taxonomy" id="227882"/>
    <lineage>
        <taxon>Bacteria</taxon>
        <taxon>Bacillati</taxon>
        <taxon>Actinomycetota</taxon>
        <taxon>Actinomycetes</taxon>
        <taxon>Kitasatosporales</taxon>
        <taxon>Streptomycetaceae</taxon>
        <taxon>Streptomyces</taxon>
    </lineage>
</organism>
<sequence length="101" mass="10985">MPVEPLSQKEIEDRLAELPGWSLDGDRISRSYRLGSHFAAAAMVVHIAQVQEELDHHSDLTLSYHTVSLTVNTHSVGGAVTELDFALARRVEDLAPGHGAS</sequence>
<proteinExistence type="inferred from homology"/>
<dbReference type="EC" id="4.2.1.96" evidence="1"/>
<dbReference type="EMBL" id="BA000030">
    <property type="protein sequence ID" value="BAC69569.1"/>
    <property type="molecule type" value="Genomic_DNA"/>
</dbReference>
<dbReference type="RefSeq" id="WP_010983297.1">
    <property type="nucleotide sequence ID" value="NZ_JZJK01000086.1"/>
</dbReference>
<dbReference type="SMR" id="Q82M02"/>
<dbReference type="GeneID" id="41538960"/>
<dbReference type="KEGG" id="sma:SAVERM_1858"/>
<dbReference type="eggNOG" id="COG2154">
    <property type="taxonomic scope" value="Bacteria"/>
</dbReference>
<dbReference type="HOGENOM" id="CLU_081974_4_3_11"/>
<dbReference type="OrthoDB" id="15077at2"/>
<dbReference type="Proteomes" id="UP000000428">
    <property type="component" value="Chromosome"/>
</dbReference>
<dbReference type="GO" id="GO:0008124">
    <property type="term" value="F:4-alpha-hydroxytetrahydrobiopterin dehydratase activity"/>
    <property type="evidence" value="ECO:0007669"/>
    <property type="project" value="UniProtKB-UniRule"/>
</dbReference>
<dbReference type="GO" id="GO:0006729">
    <property type="term" value="P:tetrahydrobiopterin biosynthetic process"/>
    <property type="evidence" value="ECO:0007669"/>
    <property type="project" value="InterPro"/>
</dbReference>
<dbReference type="CDD" id="cd00488">
    <property type="entry name" value="PCD_DCoH"/>
    <property type="match status" value="1"/>
</dbReference>
<dbReference type="Gene3D" id="3.30.1360.20">
    <property type="entry name" value="Transcriptional coactivator/pterin dehydratase"/>
    <property type="match status" value="1"/>
</dbReference>
<dbReference type="HAMAP" id="MF_00434">
    <property type="entry name" value="Pterin_4_alpha"/>
    <property type="match status" value="1"/>
</dbReference>
<dbReference type="InterPro" id="IPR036428">
    <property type="entry name" value="PCD_sf"/>
</dbReference>
<dbReference type="InterPro" id="IPR001533">
    <property type="entry name" value="Pterin_deHydtase"/>
</dbReference>
<dbReference type="NCBIfam" id="NF002017">
    <property type="entry name" value="PRK00823.1-2"/>
    <property type="match status" value="1"/>
</dbReference>
<dbReference type="PANTHER" id="PTHR12599">
    <property type="entry name" value="PTERIN-4-ALPHA-CARBINOLAMINE DEHYDRATASE"/>
    <property type="match status" value="1"/>
</dbReference>
<dbReference type="PANTHER" id="PTHR12599:SF0">
    <property type="entry name" value="PTERIN-4-ALPHA-CARBINOLAMINE DEHYDRATASE"/>
    <property type="match status" value="1"/>
</dbReference>
<dbReference type="Pfam" id="PF01329">
    <property type="entry name" value="Pterin_4a"/>
    <property type="match status" value="1"/>
</dbReference>
<dbReference type="SUPFAM" id="SSF55248">
    <property type="entry name" value="PCD-like"/>
    <property type="match status" value="1"/>
</dbReference>
<gene>
    <name type="primary">dcoH</name>
    <name type="ordered locus">SAV_1858</name>
</gene>
<protein>
    <recommendedName>
        <fullName evidence="1">Putative pterin-4-alpha-carbinolamine dehydratase</fullName>
        <shortName evidence="1">PHS</shortName>
        <ecNumber evidence="1">4.2.1.96</ecNumber>
    </recommendedName>
    <alternativeName>
        <fullName evidence="1">4-alpha-hydroxy-tetrahydropterin dehydratase</fullName>
    </alternativeName>
    <alternativeName>
        <fullName evidence="1">Pterin carbinolamine dehydratase</fullName>
        <shortName evidence="1">PCD</shortName>
    </alternativeName>
</protein>
<name>PHS_STRAW</name>
<accession>Q82M02</accession>
<reference key="1">
    <citation type="journal article" date="2001" name="Proc. Natl. Acad. Sci. U.S.A.">
        <title>Genome sequence of an industrial microorganism Streptomyces avermitilis: deducing the ability of producing secondary metabolites.</title>
        <authorList>
            <person name="Omura S."/>
            <person name="Ikeda H."/>
            <person name="Ishikawa J."/>
            <person name="Hanamoto A."/>
            <person name="Takahashi C."/>
            <person name="Shinose M."/>
            <person name="Takahashi Y."/>
            <person name="Horikawa H."/>
            <person name="Nakazawa H."/>
            <person name="Osonoe T."/>
            <person name="Kikuchi H."/>
            <person name="Shiba T."/>
            <person name="Sakaki Y."/>
            <person name="Hattori M."/>
        </authorList>
    </citation>
    <scope>NUCLEOTIDE SEQUENCE [LARGE SCALE GENOMIC DNA]</scope>
    <source>
        <strain>ATCC 31267 / DSM 46492 / JCM 5070 / NBRC 14893 / NCIMB 12804 / NRRL 8165 / MA-4680</strain>
    </source>
</reference>
<reference key="2">
    <citation type="journal article" date="2003" name="Nat. Biotechnol.">
        <title>Complete genome sequence and comparative analysis of the industrial microorganism Streptomyces avermitilis.</title>
        <authorList>
            <person name="Ikeda H."/>
            <person name="Ishikawa J."/>
            <person name="Hanamoto A."/>
            <person name="Shinose M."/>
            <person name="Kikuchi H."/>
            <person name="Shiba T."/>
            <person name="Sakaki Y."/>
            <person name="Hattori M."/>
            <person name="Omura S."/>
        </authorList>
    </citation>
    <scope>NUCLEOTIDE SEQUENCE [LARGE SCALE GENOMIC DNA]</scope>
    <source>
        <strain>ATCC 31267 / DSM 46492 / JCM 5070 / NBRC 14893 / NCIMB 12804 / NRRL 8165 / MA-4680</strain>
    </source>
</reference>
<keyword id="KW-0456">Lyase</keyword>
<keyword id="KW-1185">Reference proteome</keyword>
<feature type="chain" id="PRO_0000063096" description="Putative pterin-4-alpha-carbinolamine dehydratase">
    <location>
        <begin position="1"/>
        <end position="101"/>
    </location>
</feature>
<evidence type="ECO:0000255" key="1">
    <source>
        <dbReference type="HAMAP-Rule" id="MF_00434"/>
    </source>
</evidence>
<comment type="catalytic activity">
    <reaction evidence="1">
        <text>(4aS,6R)-4a-hydroxy-L-erythro-5,6,7,8-tetrahydrobiopterin = (6R)-L-erythro-6,7-dihydrobiopterin + H2O</text>
        <dbReference type="Rhea" id="RHEA:11920"/>
        <dbReference type="ChEBI" id="CHEBI:15377"/>
        <dbReference type="ChEBI" id="CHEBI:15642"/>
        <dbReference type="ChEBI" id="CHEBI:43120"/>
        <dbReference type="EC" id="4.2.1.96"/>
    </reaction>
</comment>
<comment type="similarity">
    <text evidence="1">Belongs to the pterin-4-alpha-carbinolamine dehydratase family.</text>
</comment>